<gene>
    <name evidence="1" type="primary">aroB</name>
    <name type="ordered locus">PA14_66600</name>
</gene>
<sequence>MRTLHVDLGERSYPIYIGENLLGDARWFAPHIVGRRVAVISNETVAPLYLETLLKALQGHEVTPVVLPDGEAYKQWETLQLIFDALLKERHDRKTTLIALGGGVIGDMAGFAAACYQRGVNFIQVPTTLLSQVDSSVGGKTGINHPLGKNMIGAFYQPQAVVIDTASLKTLPSRELSAGLAEVIKYGFICDEPFITWLEEHMDALLALEPTVVTEAIERSCAAKARVVGADERESGVRATLNLGHTFGHAIETQQGYGVWLHGEAVGAGTVMALEMSHRLGWLSAAERDRGIRLLRRAGLPVVPPAEMTAEDFMEHMAVDKKVLDGRLRLVLLQGLGNAVVTGDFPREILDATLRTDYRALADQLGDE</sequence>
<dbReference type="EC" id="4.2.3.4" evidence="1"/>
<dbReference type="EMBL" id="CP000438">
    <property type="protein sequence ID" value="ABJ14422.1"/>
    <property type="molecule type" value="Genomic_DNA"/>
</dbReference>
<dbReference type="RefSeq" id="WP_003107839.1">
    <property type="nucleotide sequence ID" value="NZ_CP034244.1"/>
</dbReference>
<dbReference type="SMR" id="Q02EX9"/>
<dbReference type="KEGG" id="pau:PA14_66600"/>
<dbReference type="PseudoCAP" id="PA14_66600"/>
<dbReference type="HOGENOM" id="CLU_001201_0_2_6"/>
<dbReference type="BioCyc" id="PAER208963:G1G74-5618-MONOMER"/>
<dbReference type="UniPathway" id="UPA00053">
    <property type="reaction ID" value="UER00085"/>
</dbReference>
<dbReference type="Proteomes" id="UP000000653">
    <property type="component" value="Chromosome"/>
</dbReference>
<dbReference type="GO" id="GO:0005737">
    <property type="term" value="C:cytoplasm"/>
    <property type="evidence" value="ECO:0007669"/>
    <property type="project" value="UniProtKB-SubCell"/>
</dbReference>
<dbReference type="GO" id="GO:0003856">
    <property type="term" value="F:3-dehydroquinate synthase activity"/>
    <property type="evidence" value="ECO:0007669"/>
    <property type="project" value="UniProtKB-UniRule"/>
</dbReference>
<dbReference type="GO" id="GO:0046872">
    <property type="term" value="F:metal ion binding"/>
    <property type="evidence" value="ECO:0007669"/>
    <property type="project" value="UniProtKB-KW"/>
</dbReference>
<dbReference type="GO" id="GO:0000166">
    <property type="term" value="F:nucleotide binding"/>
    <property type="evidence" value="ECO:0007669"/>
    <property type="project" value="UniProtKB-KW"/>
</dbReference>
<dbReference type="GO" id="GO:0008652">
    <property type="term" value="P:amino acid biosynthetic process"/>
    <property type="evidence" value="ECO:0007669"/>
    <property type="project" value="UniProtKB-KW"/>
</dbReference>
<dbReference type="GO" id="GO:0009073">
    <property type="term" value="P:aromatic amino acid family biosynthetic process"/>
    <property type="evidence" value="ECO:0007669"/>
    <property type="project" value="UniProtKB-KW"/>
</dbReference>
<dbReference type="GO" id="GO:0009423">
    <property type="term" value="P:chorismate biosynthetic process"/>
    <property type="evidence" value="ECO:0007669"/>
    <property type="project" value="UniProtKB-UniRule"/>
</dbReference>
<dbReference type="CDD" id="cd08195">
    <property type="entry name" value="DHQS"/>
    <property type="match status" value="1"/>
</dbReference>
<dbReference type="FunFam" id="1.20.1090.10:FF:000002">
    <property type="entry name" value="3-dehydroquinate synthase"/>
    <property type="match status" value="1"/>
</dbReference>
<dbReference type="FunFam" id="3.40.50.1970:FF:000001">
    <property type="entry name" value="3-dehydroquinate synthase"/>
    <property type="match status" value="1"/>
</dbReference>
<dbReference type="Gene3D" id="3.40.50.1970">
    <property type="match status" value="1"/>
</dbReference>
<dbReference type="Gene3D" id="1.20.1090.10">
    <property type="entry name" value="Dehydroquinate synthase-like - alpha domain"/>
    <property type="match status" value="1"/>
</dbReference>
<dbReference type="HAMAP" id="MF_00110">
    <property type="entry name" value="DHQ_synthase"/>
    <property type="match status" value="1"/>
</dbReference>
<dbReference type="InterPro" id="IPR050071">
    <property type="entry name" value="Dehydroquinate_synthase"/>
</dbReference>
<dbReference type="InterPro" id="IPR016037">
    <property type="entry name" value="DHQ_synth_AroB"/>
</dbReference>
<dbReference type="InterPro" id="IPR030963">
    <property type="entry name" value="DHQ_synth_fam"/>
</dbReference>
<dbReference type="InterPro" id="IPR030960">
    <property type="entry name" value="DHQS/DOIS_N"/>
</dbReference>
<dbReference type="InterPro" id="IPR056179">
    <property type="entry name" value="DHQS_C"/>
</dbReference>
<dbReference type="NCBIfam" id="TIGR01357">
    <property type="entry name" value="aroB"/>
    <property type="match status" value="1"/>
</dbReference>
<dbReference type="PANTHER" id="PTHR43622">
    <property type="entry name" value="3-DEHYDROQUINATE SYNTHASE"/>
    <property type="match status" value="1"/>
</dbReference>
<dbReference type="PANTHER" id="PTHR43622:SF7">
    <property type="entry name" value="3-DEHYDROQUINATE SYNTHASE, CHLOROPLASTIC"/>
    <property type="match status" value="1"/>
</dbReference>
<dbReference type="Pfam" id="PF01761">
    <property type="entry name" value="DHQ_synthase"/>
    <property type="match status" value="1"/>
</dbReference>
<dbReference type="Pfam" id="PF24621">
    <property type="entry name" value="DHQS_C"/>
    <property type="match status" value="1"/>
</dbReference>
<dbReference type="PIRSF" id="PIRSF001455">
    <property type="entry name" value="DHQ_synth"/>
    <property type="match status" value="1"/>
</dbReference>
<dbReference type="SUPFAM" id="SSF56796">
    <property type="entry name" value="Dehydroquinate synthase-like"/>
    <property type="match status" value="1"/>
</dbReference>
<feature type="chain" id="PRO_1000094570" description="3-dehydroquinate synthase">
    <location>
        <begin position="1"/>
        <end position="368"/>
    </location>
</feature>
<feature type="binding site" evidence="1">
    <location>
        <begin position="69"/>
        <end position="74"/>
    </location>
    <ligand>
        <name>NAD(+)</name>
        <dbReference type="ChEBI" id="CHEBI:57540"/>
    </ligand>
</feature>
<feature type="binding site" evidence="1">
    <location>
        <begin position="103"/>
        <end position="107"/>
    </location>
    <ligand>
        <name>NAD(+)</name>
        <dbReference type="ChEBI" id="CHEBI:57540"/>
    </ligand>
</feature>
<feature type="binding site" evidence="1">
    <location>
        <begin position="127"/>
        <end position="128"/>
    </location>
    <ligand>
        <name>NAD(+)</name>
        <dbReference type="ChEBI" id="CHEBI:57540"/>
    </ligand>
</feature>
<feature type="binding site" evidence="1">
    <location>
        <position position="140"/>
    </location>
    <ligand>
        <name>NAD(+)</name>
        <dbReference type="ChEBI" id="CHEBI:57540"/>
    </ligand>
</feature>
<feature type="binding site" evidence="1">
    <location>
        <position position="149"/>
    </location>
    <ligand>
        <name>NAD(+)</name>
        <dbReference type="ChEBI" id="CHEBI:57540"/>
    </ligand>
</feature>
<feature type="binding site" evidence="1">
    <location>
        <position position="182"/>
    </location>
    <ligand>
        <name>Zn(2+)</name>
        <dbReference type="ChEBI" id="CHEBI:29105"/>
    </ligand>
</feature>
<feature type="binding site" evidence="1">
    <location>
        <position position="245"/>
    </location>
    <ligand>
        <name>Zn(2+)</name>
        <dbReference type="ChEBI" id="CHEBI:29105"/>
    </ligand>
</feature>
<feature type="binding site" evidence="1">
    <location>
        <position position="262"/>
    </location>
    <ligand>
        <name>Zn(2+)</name>
        <dbReference type="ChEBI" id="CHEBI:29105"/>
    </ligand>
</feature>
<organism>
    <name type="scientific">Pseudomonas aeruginosa (strain UCBPP-PA14)</name>
    <dbReference type="NCBI Taxonomy" id="208963"/>
    <lineage>
        <taxon>Bacteria</taxon>
        <taxon>Pseudomonadati</taxon>
        <taxon>Pseudomonadota</taxon>
        <taxon>Gammaproteobacteria</taxon>
        <taxon>Pseudomonadales</taxon>
        <taxon>Pseudomonadaceae</taxon>
        <taxon>Pseudomonas</taxon>
    </lineage>
</organism>
<reference key="1">
    <citation type="journal article" date="2006" name="Genome Biol.">
        <title>Genomic analysis reveals that Pseudomonas aeruginosa virulence is combinatorial.</title>
        <authorList>
            <person name="Lee D.G."/>
            <person name="Urbach J.M."/>
            <person name="Wu G."/>
            <person name="Liberati N.T."/>
            <person name="Feinbaum R.L."/>
            <person name="Miyata S."/>
            <person name="Diggins L.T."/>
            <person name="He J."/>
            <person name="Saucier M."/>
            <person name="Deziel E."/>
            <person name="Friedman L."/>
            <person name="Li L."/>
            <person name="Grills G."/>
            <person name="Montgomery K."/>
            <person name="Kucherlapati R."/>
            <person name="Rahme L.G."/>
            <person name="Ausubel F.M."/>
        </authorList>
    </citation>
    <scope>NUCLEOTIDE SEQUENCE [LARGE SCALE GENOMIC DNA]</scope>
    <source>
        <strain>UCBPP-PA14</strain>
    </source>
</reference>
<evidence type="ECO:0000255" key="1">
    <source>
        <dbReference type="HAMAP-Rule" id="MF_00110"/>
    </source>
</evidence>
<name>AROB_PSEAB</name>
<proteinExistence type="inferred from homology"/>
<comment type="function">
    <text evidence="1">Catalyzes the conversion of 3-deoxy-D-arabino-heptulosonate 7-phosphate (DAHP) to dehydroquinate (DHQ).</text>
</comment>
<comment type="catalytic activity">
    <reaction evidence="1">
        <text>7-phospho-2-dehydro-3-deoxy-D-arabino-heptonate = 3-dehydroquinate + phosphate</text>
        <dbReference type="Rhea" id="RHEA:21968"/>
        <dbReference type="ChEBI" id="CHEBI:32364"/>
        <dbReference type="ChEBI" id="CHEBI:43474"/>
        <dbReference type="ChEBI" id="CHEBI:58394"/>
        <dbReference type="EC" id="4.2.3.4"/>
    </reaction>
</comment>
<comment type="cofactor">
    <cofactor evidence="1">
        <name>Co(2+)</name>
        <dbReference type="ChEBI" id="CHEBI:48828"/>
    </cofactor>
    <cofactor evidence="1">
        <name>Zn(2+)</name>
        <dbReference type="ChEBI" id="CHEBI:29105"/>
    </cofactor>
    <text evidence="1">Binds 1 divalent metal cation per subunit. Can use either Co(2+) or Zn(2+).</text>
</comment>
<comment type="cofactor">
    <cofactor evidence="1">
        <name>NAD(+)</name>
        <dbReference type="ChEBI" id="CHEBI:57540"/>
    </cofactor>
</comment>
<comment type="pathway">
    <text evidence="1">Metabolic intermediate biosynthesis; chorismate biosynthesis; chorismate from D-erythrose 4-phosphate and phosphoenolpyruvate: step 2/7.</text>
</comment>
<comment type="subcellular location">
    <subcellularLocation>
        <location evidence="1">Cytoplasm</location>
    </subcellularLocation>
</comment>
<comment type="similarity">
    <text evidence="1">Belongs to the sugar phosphate cyclases superfamily. Dehydroquinate synthase family.</text>
</comment>
<keyword id="KW-0028">Amino-acid biosynthesis</keyword>
<keyword id="KW-0057">Aromatic amino acid biosynthesis</keyword>
<keyword id="KW-0170">Cobalt</keyword>
<keyword id="KW-0963">Cytoplasm</keyword>
<keyword id="KW-0456">Lyase</keyword>
<keyword id="KW-0479">Metal-binding</keyword>
<keyword id="KW-0520">NAD</keyword>
<keyword id="KW-0547">Nucleotide-binding</keyword>
<keyword id="KW-0862">Zinc</keyword>
<protein>
    <recommendedName>
        <fullName evidence="1">3-dehydroquinate synthase</fullName>
        <shortName evidence="1">DHQS</shortName>
        <ecNumber evidence="1">4.2.3.4</ecNumber>
    </recommendedName>
</protein>
<accession>Q02EX9</accession>